<accession>A6TRK7</accession>
<gene>
    <name evidence="2" type="primary">infB</name>
    <name type="ordered locus">Amet_2673</name>
</gene>
<dbReference type="EMBL" id="CP000724">
    <property type="protein sequence ID" value="ABR48825.1"/>
    <property type="molecule type" value="Genomic_DNA"/>
</dbReference>
<dbReference type="RefSeq" id="WP_012063798.1">
    <property type="nucleotide sequence ID" value="NC_009633.1"/>
</dbReference>
<dbReference type="SMR" id="A6TRK7"/>
<dbReference type="STRING" id="293826.Amet_2673"/>
<dbReference type="KEGG" id="amt:Amet_2673"/>
<dbReference type="eggNOG" id="COG0532">
    <property type="taxonomic scope" value="Bacteria"/>
</dbReference>
<dbReference type="HOGENOM" id="CLU_006301_5_1_9"/>
<dbReference type="Proteomes" id="UP000001572">
    <property type="component" value="Chromosome"/>
</dbReference>
<dbReference type="GO" id="GO:0005829">
    <property type="term" value="C:cytosol"/>
    <property type="evidence" value="ECO:0007669"/>
    <property type="project" value="TreeGrafter"/>
</dbReference>
<dbReference type="GO" id="GO:0005525">
    <property type="term" value="F:GTP binding"/>
    <property type="evidence" value="ECO:0007669"/>
    <property type="project" value="UniProtKB-KW"/>
</dbReference>
<dbReference type="GO" id="GO:0003924">
    <property type="term" value="F:GTPase activity"/>
    <property type="evidence" value="ECO:0007669"/>
    <property type="project" value="UniProtKB-UniRule"/>
</dbReference>
<dbReference type="GO" id="GO:0003743">
    <property type="term" value="F:translation initiation factor activity"/>
    <property type="evidence" value="ECO:0007669"/>
    <property type="project" value="UniProtKB-UniRule"/>
</dbReference>
<dbReference type="CDD" id="cd01887">
    <property type="entry name" value="IF2_eIF5B"/>
    <property type="match status" value="1"/>
</dbReference>
<dbReference type="CDD" id="cd03702">
    <property type="entry name" value="IF2_mtIF2_II"/>
    <property type="match status" value="1"/>
</dbReference>
<dbReference type="CDD" id="cd03692">
    <property type="entry name" value="mtIF2_IVc"/>
    <property type="match status" value="1"/>
</dbReference>
<dbReference type="FunFam" id="2.40.30.10:FF:000007">
    <property type="entry name" value="Translation initiation factor IF-2"/>
    <property type="match status" value="1"/>
</dbReference>
<dbReference type="FunFam" id="2.40.30.10:FF:000008">
    <property type="entry name" value="Translation initiation factor IF-2"/>
    <property type="match status" value="1"/>
</dbReference>
<dbReference type="FunFam" id="3.40.50.10050:FF:000001">
    <property type="entry name" value="Translation initiation factor IF-2"/>
    <property type="match status" value="1"/>
</dbReference>
<dbReference type="FunFam" id="3.40.50.300:FF:000019">
    <property type="entry name" value="Translation initiation factor IF-2"/>
    <property type="match status" value="1"/>
</dbReference>
<dbReference type="Gene3D" id="1.10.10.2480">
    <property type="match status" value="1"/>
</dbReference>
<dbReference type="Gene3D" id="3.40.50.300">
    <property type="entry name" value="P-loop containing nucleotide triphosphate hydrolases"/>
    <property type="match status" value="1"/>
</dbReference>
<dbReference type="Gene3D" id="2.40.30.10">
    <property type="entry name" value="Translation factors"/>
    <property type="match status" value="2"/>
</dbReference>
<dbReference type="Gene3D" id="3.40.50.10050">
    <property type="entry name" value="Translation initiation factor IF- 2, domain 3"/>
    <property type="match status" value="1"/>
</dbReference>
<dbReference type="HAMAP" id="MF_00100_B">
    <property type="entry name" value="IF_2_B"/>
    <property type="match status" value="1"/>
</dbReference>
<dbReference type="InterPro" id="IPR053905">
    <property type="entry name" value="EF-G-like_DII"/>
</dbReference>
<dbReference type="InterPro" id="IPR044145">
    <property type="entry name" value="IF2_II"/>
</dbReference>
<dbReference type="InterPro" id="IPR006847">
    <property type="entry name" value="IF2_N"/>
</dbReference>
<dbReference type="InterPro" id="IPR027417">
    <property type="entry name" value="P-loop_NTPase"/>
</dbReference>
<dbReference type="InterPro" id="IPR005225">
    <property type="entry name" value="Small_GTP-bd"/>
</dbReference>
<dbReference type="InterPro" id="IPR000795">
    <property type="entry name" value="T_Tr_GTP-bd_dom"/>
</dbReference>
<dbReference type="InterPro" id="IPR000178">
    <property type="entry name" value="TF_IF2_bacterial-like"/>
</dbReference>
<dbReference type="InterPro" id="IPR015760">
    <property type="entry name" value="TIF_IF2"/>
</dbReference>
<dbReference type="InterPro" id="IPR023115">
    <property type="entry name" value="TIF_IF2_dom3"/>
</dbReference>
<dbReference type="InterPro" id="IPR036925">
    <property type="entry name" value="TIF_IF2_dom3_sf"/>
</dbReference>
<dbReference type="InterPro" id="IPR009000">
    <property type="entry name" value="Transl_B-barrel_sf"/>
</dbReference>
<dbReference type="NCBIfam" id="TIGR00487">
    <property type="entry name" value="IF-2"/>
    <property type="match status" value="1"/>
</dbReference>
<dbReference type="NCBIfam" id="TIGR00231">
    <property type="entry name" value="small_GTP"/>
    <property type="match status" value="1"/>
</dbReference>
<dbReference type="PANTHER" id="PTHR43381:SF5">
    <property type="entry name" value="TR-TYPE G DOMAIN-CONTAINING PROTEIN"/>
    <property type="match status" value="1"/>
</dbReference>
<dbReference type="PANTHER" id="PTHR43381">
    <property type="entry name" value="TRANSLATION INITIATION FACTOR IF-2-RELATED"/>
    <property type="match status" value="1"/>
</dbReference>
<dbReference type="Pfam" id="PF22042">
    <property type="entry name" value="EF-G_D2"/>
    <property type="match status" value="1"/>
</dbReference>
<dbReference type="Pfam" id="PF00009">
    <property type="entry name" value="GTP_EFTU"/>
    <property type="match status" value="1"/>
</dbReference>
<dbReference type="Pfam" id="PF11987">
    <property type="entry name" value="IF-2"/>
    <property type="match status" value="1"/>
</dbReference>
<dbReference type="Pfam" id="PF04760">
    <property type="entry name" value="IF2_N"/>
    <property type="match status" value="2"/>
</dbReference>
<dbReference type="SUPFAM" id="SSF52156">
    <property type="entry name" value="Initiation factor IF2/eIF5b, domain 3"/>
    <property type="match status" value="1"/>
</dbReference>
<dbReference type="SUPFAM" id="SSF52540">
    <property type="entry name" value="P-loop containing nucleoside triphosphate hydrolases"/>
    <property type="match status" value="1"/>
</dbReference>
<dbReference type="SUPFAM" id="SSF50447">
    <property type="entry name" value="Translation proteins"/>
    <property type="match status" value="2"/>
</dbReference>
<dbReference type="PROSITE" id="PS51722">
    <property type="entry name" value="G_TR_2"/>
    <property type="match status" value="1"/>
</dbReference>
<dbReference type="PROSITE" id="PS01176">
    <property type="entry name" value="IF2"/>
    <property type="match status" value="1"/>
</dbReference>
<proteinExistence type="inferred from homology"/>
<organism>
    <name type="scientific">Alkaliphilus metalliredigens (strain QYMF)</name>
    <dbReference type="NCBI Taxonomy" id="293826"/>
    <lineage>
        <taxon>Bacteria</taxon>
        <taxon>Bacillati</taxon>
        <taxon>Bacillota</taxon>
        <taxon>Clostridia</taxon>
        <taxon>Peptostreptococcales</taxon>
        <taxon>Natronincolaceae</taxon>
        <taxon>Alkaliphilus</taxon>
    </lineage>
</organism>
<evidence type="ECO:0000250" key="1"/>
<evidence type="ECO:0000255" key="2">
    <source>
        <dbReference type="HAMAP-Rule" id="MF_00100"/>
    </source>
</evidence>
<evidence type="ECO:0000256" key="3">
    <source>
        <dbReference type="SAM" id="MobiDB-lite"/>
    </source>
</evidence>
<sequence length="706" mass="76793">MSKVRVYQLAKELGVSSKELIIKLKDLSIEVGNHMSTLNDDDANLLIELFTEDNKEVNSDSNQESKVNTDDKLDKIDKPNKIENAPSEENPKKNKKSKKKQKNKKKGPTMKDEKGLIEENTDEQILEIGESIILKDLTHMLDKTPTEVITKLIGLGMMVTINQEIDFDTAAMVASEYGVELKQAGVMDDSDVVDDLIIPEDDEKDLMSRPPVVTVMGHVDHGKTSLLDAIRKTKVTAKEAGGITQHIGASEIQINDKKIVFLDTPGHEAFTSMRARGAKVTDIAILVVAADDGVMPQTIEAINHAKAAEVPIIVAINKIDKPGANQDRVKQELSDHGILIEAWGGDVIAVPVSAIEGTNINELLEMILLVSEVEEFKANPNRQAIGVVIEAKLDKGKGTVATVLIQNGTLHVGDSVVVGSTYGRIRAMTNHVGEKLREATPSTAVEITGLSDVPEAGNQLVVVADDKMARNTAEKRAHKAKVAQQKITQRVSLDDLYNQMQQGEIKELNIIVKADVQGSVQAVKQSLEKLSNDKVSLRTIHGGVGAITESDVMLAAASNAIITGFNVRPTSTATAISKKEKVDIRTYRIIYNAIEDIEAAMVGMLDPEFKEVDLGKAEVRAAFKVPGAGVVAGSYITEGKILRSASIRLVRDGIVVHEGAIGSLRRFKDDVKEVNTGYECGIGIDKFNDVKEGDIIEAYTMEEIKR</sequence>
<keyword id="KW-0963">Cytoplasm</keyword>
<keyword id="KW-0342">GTP-binding</keyword>
<keyword id="KW-0396">Initiation factor</keyword>
<keyword id="KW-0547">Nucleotide-binding</keyword>
<keyword id="KW-0648">Protein biosynthesis</keyword>
<keyword id="KW-1185">Reference proteome</keyword>
<feature type="chain" id="PRO_1000057648" description="Translation initiation factor IF-2">
    <location>
        <begin position="1"/>
        <end position="706"/>
    </location>
</feature>
<feature type="domain" description="tr-type G">
    <location>
        <begin position="208"/>
        <end position="375"/>
    </location>
</feature>
<feature type="region of interest" description="Disordered" evidence="3">
    <location>
        <begin position="55"/>
        <end position="117"/>
    </location>
</feature>
<feature type="region of interest" description="G1" evidence="1">
    <location>
        <begin position="217"/>
        <end position="224"/>
    </location>
</feature>
<feature type="region of interest" description="G2" evidence="1">
    <location>
        <begin position="242"/>
        <end position="246"/>
    </location>
</feature>
<feature type="region of interest" description="G3" evidence="1">
    <location>
        <begin position="263"/>
        <end position="266"/>
    </location>
</feature>
<feature type="region of interest" description="G4" evidence="1">
    <location>
        <begin position="317"/>
        <end position="320"/>
    </location>
</feature>
<feature type="region of interest" description="G5" evidence="1">
    <location>
        <begin position="353"/>
        <end position="355"/>
    </location>
</feature>
<feature type="compositionally biased region" description="Basic and acidic residues" evidence="3">
    <location>
        <begin position="67"/>
        <end position="81"/>
    </location>
</feature>
<feature type="compositionally biased region" description="Basic residues" evidence="3">
    <location>
        <begin position="93"/>
        <end position="108"/>
    </location>
</feature>
<feature type="binding site" evidence="2">
    <location>
        <begin position="217"/>
        <end position="224"/>
    </location>
    <ligand>
        <name>GTP</name>
        <dbReference type="ChEBI" id="CHEBI:37565"/>
    </ligand>
</feature>
<feature type="binding site" evidence="2">
    <location>
        <begin position="263"/>
        <end position="267"/>
    </location>
    <ligand>
        <name>GTP</name>
        <dbReference type="ChEBI" id="CHEBI:37565"/>
    </ligand>
</feature>
<feature type="binding site" evidence="2">
    <location>
        <begin position="317"/>
        <end position="320"/>
    </location>
    <ligand>
        <name>GTP</name>
        <dbReference type="ChEBI" id="CHEBI:37565"/>
    </ligand>
</feature>
<reference key="1">
    <citation type="journal article" date="2016" name="Genome Announc.">
        <title>Complete genome sequence of Alkaliphilus metalliredigens strain QYMF, an alkaliphilic and metal-reducing bacterium isolated from borax-contaminated leachate ponds.</title>
        <authorList>
            <person name="Hwang C."/>
            <person name="Copeland A."/>
            <person name="Lucas S."/>
            <person name="Lapidus A."/>
            <person name="Barry K."/>
            <person name="Detter J.C."/>
            <person name="Glavina Del Rio T."/>
            <person name="Hammon N."/>
            <person name="Israni S."/>
            <person name="Dalin E."/>
            <person name="Tice H."/>
            <person name="Pitluck S."/>
            <person name="Chertkov O."/>
            <person name="Brettin T."/>
            <person name="Bruce D."/>
            <person name="Han C."/>
            <person name="Schmutz J."/>
            <person name="Larimer F."/>
            <person name="Land M.L."/>
            <person name="Hauser L."/>
            <person name="Kyrpides N."/>
            <person name="Mikhailova N."/>
            <person name="Ye Q."/>
            <person name="Zhou J."/>
            <person name="Richardson P."/>
            <person name="Fields M.W."/>
        </authorList>
    </citation>
    <scope>NUCLEOTIDE SEQUENCE [LARGE SCALE GENOMIC DNA]</scope>
    <source>
        <strain>QYMF</strain>
    </source>
</reference>
<comment type="function">
    <text evidence="2">One of the essential components for the initiation of protein synthesis. Protects formylmethionyl-tRNA from spontaneous hydrolysis and promotes its binding to the 30S ribosomal subunits. Also involved in the hydrolysis of GTP during the formation of the 70S ribosomal complex.</text>
</comment>
<comment type="subcellular location">
    <subcellularLocation>
        <location evidence="2">Cytoplasm</location>
    </subcellularLocation>
</comment>
<comment type="similarity">
    <text evidence="2">Belongs to the TRAFAC class translation factor GTPase superfamily. Classic translation factor GTPase family. IF-2 subfamily.</text>
</comment>
<name>IF2_ALKMQ</name>
<protein>
    <recommendedName>
        <fullName evidence="2">Translation initiation factor IF-2</fullName>
    </recommendedName>
</protein>